<dbReference type="EC" id="6.1.1.16" evidence="1"/>
<dbReference type="EMBL" id="CP000698">
    <property type="protein sequence ID" value="ABQ28317.1"/>
    <property type="molecule type" value="Genomic_DNA"/>
</dbReference>
<dbReference type="RefSeq" id="WP_011940948.1">
    <property type="nucleotide sequence ID" value="NC_009483.1"/>
</dbReference>
<dbReference type="SMR" id="A5G949"/>
<dbReference type="STRING" id="351605.Gura_4174"/>
<dbReference type="KEGG" id="gur:Gura_4174"/>
<dbReference type="HOGENOM" id="CLU_013528_0_1_7"/>
<dbReference type="OrthoDB" id="9815130at2"/>
<dbReference type="Proteomes" id="UP000006695">
    <property type="component" value="Chromosome"/>
</dbReference>
<dbReference type="GO" id="GO:0005829">
    <property type="term" value="C:cytosol"/>
    <property type="evidence" value="ECO:0007669"/>
    <property type="project" value="TreeGrafter"/>
</dbReference>
<dbReference type="GO" id="GO:0005524">
    <property type="term" value="F:ATP binding"/>
    <property type="evidence" value="ECO:0007669"/>
    <property type="project" value="UniProtKB-UniRule"/>
</dbReference>
<dbReference type="GO" id="GO:0004817">
    <property type="term" value="F:cysteine-tRNA ligase activity"/>
    <property type="evidence" value="ECO:0007669"/>
    <property type="project" value="UniProtKB-UniRule"/>
</dbReference>
<dbReference type="GO" id="GO:0008270">
    <property type="term" value="F:zinc ion binding"/>
    <property type="evidence" value="ECO:0007669"/>
    <property type="project" value="UniProtKB-UniRule"/>
</dbReference>
<dbReference type="GO" id="GO:0006423">
    <property type="term" value="P:cysteinyl-tRNA aminoacylation"/>
    <property type="evidence" value="ECO:0007669"/>
    <property type="project" value="UniProtKB-UniRule"/>
</dbReference>
<dbReference type="CDD" id="cd07963">
    <property type="entry name" value="Anticodon_Ia_Cys"/>
    <property type="match status" value="1"/>
</dbReference>
<dbReference type="CDD" id="cd00672">
    <property type="entry name" value="CysRS_core"/>
    <property type="match status" value="1"/>
</dbReference>
<dbReference type="FunFam" id="3.40.50.620:FF:000009">
    <property type="entry name" value="Cysteine--tRNA ligase"/>
    <property type="match status" value="1"/>
</dbReference>
<dbReference type="Gene3D" id="1.20.120.1910">
    <property type="entry name" value="Cysteine-tRNA ligase, C-terminal anti-codon recognition domain"/>
    <property type="match status" value="1"/>
</dbReference>
<dbReference type="Gene3D" id="3.40.50.620">
    <property type="entry name" value="HUPs"/>
    <property type="match status" value="1"/>
</dbReference>
<dbReference type="HAMAP" id="MF_00041">
    <property type="entry name" value="Cys_tRNA_synth"/>
    <property type="match status" value="1"/>
</dbReference>
<dbReference type="InterPro" id="IPR015803">
    <property type="entry name" value="Cys-tRNA-ligase"/>
</dbReference>
<dbReference type="InterPro" id="IPR015273">
    <property type="entry name" value="Cys-tRNA-synt_Ia_DALR"/>
</dbReference>
<dbReference type="InterPro" id="IPR024909">
    <property type="entry name" value="Cys-tRNA/MSH_ligase"/>
</dbReference>
<dbReference type="InterPro" id="IPR014729">
    <property type="entry name" value="Rossmann-like_a/b/a_fold"/>
</dbReference>
<dbReference type="InterPro" id="IPR032678">
    <property type="entry name" value="tRNA-synt_1_cat_dom"/>
</dbReference>
<dbReference type="InterPro" id="IPR009080">
    <property type="entry name" value="tRNAsynth_Ia_anticodon-bd"/>
</dbReference>
<dbReference type="NCBIfam" id="TIGR00435">
    <property type="entry name" value="cysS"/>
    <property type="match status" value="1"/>
</dbReference>
<dbReference type="PANTHER" id="PTHR10890:SF3">
    <property type="entry name" value="CYSTEINE--TRNA LIGASE, CYTOPLASMIC"/>
    <property type="match status" value="1"/>
</dbReference>
<dbReference type="PANTHER" id="PTHR10890">
    <property type="entry name" value="CYSTEINYL-TRNA SYNTHETASE"/>
    <property type="match status" value="1"/>
</dbReference>
<dbReference type="Pfam" id="PF09190">
    <property type="entry name" value="DALR_2"/>
    <property type="match status" value="1"/>
</dbReference>
<dbReference type="Pfam" id="PF01406">
    <property type="entry name" value="tRNA-synt_1e"/>
    <property type="match status" value="1"/>
</dbReference>
<dbReference type="PRINTS" id="PR00983">
    <property type="entry name" value="TRNASYNTHCYS"/>
</dbReference>
<dbReference type="SMART" id="SM00840">
    <property type="entry name" value="DALR_2"/>
    <property type="match status" value="1"/>
</dbReference>
<dbReference type="SUPFAM" id="SSF47323">
    <property type="entry name" value="Anticodon-binding domain of a subclass of class I aminoacyl-tRNA synthetases"/>
    <property type="match status" value="1"/>
</dbReference>
<dbReference type="SUPFAM" id="SSF52374">
    <property type="entry name" value="Nucleotidylyl transferase"/>
    <property type="match status" value="1"/>
</dbReference>
<gene>
    <name evidence="1" type="primary">cysS</name>
    <name type="ordered locus">Gura_4174</name>
</gene>
<protein>
    <recommendedName>
        <fullName evidence="1">Cysteine--tRNA ligase</fullName>
        <ecNumber evidence="1">6.1.1.16</ecNumber>
    </recommendedName>
    <alternativeName>
        <fullName evidence="1">Cysteinyl-tRNA synthetase</fullName>
        <shortName evidence="1">CysRS</shortName>
    </alternativeName>
</protein>
<sequence length="494" mass="55863">MALRVYNTLTGTKEDFVPIEPGKVKMYVCGVTVYDHCHIGHARANVVFDVIYRYLRSLGLEVNYVRNYTDIDDKIINRANREGVAYDAISERFIKEFDRDMAQLGLLLPTSQPKATEHIPEIITLVQTLIDKGFAYQMGGDVNFCVEKFDPYLKLSKRNLEDMQAGARIEVDERKRHPMDFVLWKEAKPGEPFWESPWGKGRPGWHIECSAMSMKYLGETFDIHGGGKDLVFPHHENEIAQSEAASGKPFVKYWLHNGFVNINSEKMSKSLGNFFTIKEVLDKYDSEVLRFFLLSAHYRSPLDFSDQNLTEAETGMERIYKALVAIDETLASNPATGGEEIDASSLGEAERELFDKSGSLPLRFREAMDDDFNTALAMGHIFDLVRCVNRVLSEAKERSNTLSALCAQVKANIGKIADVLGIFTSEPASLLTRLKDRKASELDISVEEIERLITERAAARKAKDFKRSDEIRDFLLGKNIVLLDSAQGTSWSVK</sequence>
<reference key="1">
    <citation type="submission" date="2007-05" db="EMBL/GenBank/DDBJ databases">
        <title>Complete sequence of Geobacter uraniireducens Rf4.</title>
        <authorList>
            <consortium name="US DOE Joint Genome Institute"/>
            <person name="Copeland A."/>
            <person name="Lucas S."/>
            <person name="Lapidus A."/>
            <person name="Barry K."/>
            <person name="Detter J.C."/>
            <person name="Glavina del Rio T."/>
            <person name="Hammon N."/>
            <person name="Israni S."/>
            <person name="Dalin E."/>
            <person name="Tice H."/>
            <person name="Pitluck S."/>
            <person name="Chertkov O."/>
            <person name="Brettin T."/>
            <person name="Bruce D."/>
            <person name="Han C."/>
            <person name="Schmutz J."/>
            <person name="Larimer F."/>
            <person name="Land M."/>
            <person name="Hauser L."/>
            <person name="Kyrpides N."/>
            <person name="Mikhailova N."/>
            <person name="Shelobolina E."/>
            <person name="Aklujkar M."/>
            <person name="Lovley D."/>
            <person name="Richardson P."/>
        </authorList>
    </citation>
    <scope>NUCLEOTIDE SEQUENCE [LARGE SCALE GENOMIC DNA]</scope>
    <source>
        <strain>ATCC BAA-1134 / JCM 13001 / Rf4</strain>
    </source>
</reference>
<accession>A5G949</accession>
<evidence type="ECO:0000255" key="1">
    <source>
        <dbReference type="HAMAP-Rule" id="MF_00041"/>
    </source>
</evidence>
<comment type="catalytic activity">
    <reaction evidence="1">
        <text>tRNA(Cys) + L-cysteine + ATP = L-cysteinyl-tRNA(Cys) + AMP + diphosphate</text>
        <dbReference type="Rhea" id="RHEA:17773"/>
        <dbReference type="Rhea" id="RHEA-COMP:9661"/>
        <dbReference type="Rhea" id="RHEA-COMP:9679"/>
        <dbReference type="ChEBI" id="CHEBI:30616"/>
        <dbReference type="ChEBI" id="CHEBI:33019"/>
        <dbReference type="ChEBI" id="CHEBI:35235"/>
        <dbReference type="ChEBI" id="CHEBI:78442"/>
        <dbReference type="ChEBI" id="CHEBI:78517"/>
        <dbReference type="ChEBI" id="CHEBI:456215"/>
        <dbReference type="EC" id="6.1.1.16"/>
    </reaction>
</comment>
<comment type="cofactor">
    <cofactor evidence="1">
        <name>Zn(2+)</name>
        <dbReference type="ChEBI" id="CHEBI:29105"/>
    </cofactor>
    <text evidence="1">Binds 1 zinc ion per subunit.</text>
</comment>
<comment type="subunit">
    <text evidence="1">Monomer.</text>
</comment>
<comment type="subcellular location">
    <subcellularLocation>
        <location evidence="1">Cytoplasm</location>
    </subcellularLocation>
</comment>
<comment type="similarity">
    <text evidence="1">Belongs to the class-I aminoacyl-tRNA synthetase family.</text>
</comment>
<keyword id="KW-0030">Aminoacyl-tRNA synthetase</keyword>
<keyword id="KW-0067">ATP-binding</keyword>
<keyword id="KW-0963">Cytoplasm</keyword>
<keyword id="KW-0436">Ligase</keyword>
<keyword id="KW-0479">Metal-binding</keyword>
<keyword id="KW-0547">Nucleotide-binding</keyword>
<keyword id="KW-0648">Protein biosynthesis</keyword>
<keyword id="KW-1185">Reference proteome</keyword>
<keyword id="KW-0862">Zinc</keyword>
<organism>
    <name type="scientific">Geotalea uraniireducens (strain Rf4)</name>
    <name type="common">Geobacter uraniireducens</name>
    <dbReference type="NCBI Taxonomy" id="351605"/>
    <lineage>
        <taxon>Bacteria</taxon>
        <taxon>Pseudomonadati</taxon>
        <taxon>Thermodesulfobacteriota</taxon>
        <taxon>Desulfuromonadia</taxon>
        <taxon>Geobacterales</taxon>
        <taxon>Geobacteraceae</taxon>
        <taxon>Geotalea</taxon>
    </lineage>
</organism>
<name>SYC_GEOUR</name>
<feature type="chain" id="PRO_1000074614" description="Cysteine--tRNA ligase">
    <location>
        <begin position="1"/>
        <end position="494"/>
    </location>
</feature>
<feature type="short sequence motif" description="'HIGH' region">
    <location>
        <begin position="31"/>
        <end position="41"/>
    </location>
</feature>
<feature type="short sequence motif" description="'KMSKS' region">
    <location>
        <begin position="266"/>
        <end position="270"/>
    </location>
</feature>
<feature type="binding site" evidence="1">
    <location>
        <position position="29"/>
    </location>
    <ligand>
        <name>Zn(2+)</name>
        <dbReference type="ChEBI" id="CHEBI:29105"/>
    </ligand>
</feature>
<feature type="binding site" evidence="1">
    <location>
        <position position="209"/>
    </location>
    <ligand>
        <name>Zn(2+)</name>
        <dbReference type="ChEBI" id="CHEBI:29105"/>
    </ligand>
</feature>
<feature type="binding site" evidence="1">
    <location>
        <position position="234"/>
    </location>
    <ligand>
        <name>Zn(2+)</name>
        <dbReference type="ChEBI" id="CHEBI:29105"/>
    </ligand>
</feature>
<feature type="binding site" evidence="1">
    <location>
        <position position="238"/>
    </location>
    <ligand>
        <name>Zn(2+)</name>
        <dbReference type="ChEBI" id="CHEBI:29105"/>
    </ligand>
</feature>
<feature type="binding site" evidence="1">
    <location>
        <position position="269"/>
    </location>
    <ligand>
        <name>ATP</name>
        <dbReference type="ChEBI" id="CHEBI:30616"/>
    </ligand>
</feature>
<proteinExistence type="inferred from homology"/>